<accession>Q99Y58</accession>
<accession>Q48WT0</accession>
<organism>
    <name type="scientific">Streptococcus pyogenes serotype M1</name>
    <dbReference type="NCBI Taxonomy" id="301447"/>
    <lineage>
        <taxon>Bacteria</taxon>
        <taxon>Bacillati</taxon>
        <taxon>Bacillota</taxon>
        <taxon>Bacilli</taxon>
        <taxon>Lactobacillales</taxon>
        <taxon>Streptococcaceae</taxon>
        <taxon>Streptococcus</taxon>
    </lineage>
</organism>
<sequence length="760" mass="86738">MRYNQFSYIPTSLERAAEELKELGFDLDLQKTAKASLESFLRKLFFHYPDSDYPLSHLIAKNDMDALSFFQSEQELSKEVFDLLALQVLGFIPGVDFTEADAFLDKLAFPIHFDETEIIKHIHHLLATRCKSGMTLIDDLVSQGMLTMDNDYHFFNGKSLATFDTSQLIREVVYVEAPLDTDQDGQLDLIKVNIIRPQSQKPLPTLMTPSPYHQGINEVANDKKLYRMEKELVVKKRRQITVEDRDFIPLETQPCKLPIGQNLESFSYINSYSLNDYFLARGFANIYVSGVGTAGSTGFMTSGNYAQIESFKAVIDWLNGRATAYTSHSKTHQVRADWANGLVCTTGKSYLGTMSTGLATTGVDGLAMIIAESAISSWYNYYRENGLVCSPGGYPGEDLDVLTELTYSRNLLAGDYLRHNDRYQELLNQQSQALDRQSGDYNQFWHDRNYLKNAHQIKCDVVYTHGLQDWNVKPRQVYEIFNALPSTINKHLFLHQGEHVYMHNWQSIDFRESMNALLCQKLLGLANDFSLPEMIWQDNTCPQNWQERKVFGTSTIKELDLGQELLLIDNHYGEDEFKAYGKDFRAFKAALFKGKANQALIDILLEEDLPINGEIVLQLKVKSSENKGLLSAQILDYGKKKRLGDLPIALTQSSIDNGQNFSREPLKELPFREDSYRVISKGFMNLQNRNNLSSIETIPNNKWMTVRLPLQPTIYHLEKGDTLRVILYTTDFEHTVRDNSNYALTIDLSQSQLIVPIASN</sequence>
<reference key="1">
    <citation type="journal article" date="2001" name="Proc. Natl. Acad. Sci. U.S.A.">
        <title>Complete genome sequence of an M1 strain of Streptococcus pyogenes.</title>
        <authorList>
            <person name="Ferretti J.J."/>
            <person name="McShan W.M."/>
            <person name="Ajdic D.J."/>
            <person name="Savic D.J."/>
            <person name="Savic G."/>
            <person name="Lyon K."/>
            <person name="Primeaux C."/>
            <person name="Sezate S."/>
            <person name="Suvorov A.N."/>
            <person name="Kenton S."/>
            <person name="Lai H.S."/>
            <person name="Lin S.P."/>
            <person name="Qian Y."/>
            <person name="Jia H.G."/>
            <person name="Najar F.Z."/>
            <person name="Ren Q."/>
            <person name="Zhu H."/>
            <person name="Song L."/>
            <person name="White J."/>
            <person name="Yuan X."/>
            <person name="Clifton S.W."/>
            <person name="Roe B.A."/>
            <person name="McLaughlin R.E."/>
        </authorList>
    </citation>
    <scope>NUCLEOTIDE SEQUENCE [LARGE SCALE GENOMIC DNA]</scope>
    <source>
        <strain>ATCC 700294 / SF370 / Serotype M1</strain>
    </source>
</reference>
<reference key="2">
    <citation type="journal article" date="2005" name="J. Infect. Dis.">
        <title>Evolutionary origin and emergence of a highly successful clone of serotype M1 group A Streptococcus involved multiple horizontal gene transfer events.</title>
        <authorList>
            <person name="Sumby P."/>
            <person name="Porcella S.F."/>
            <person name="Madrigal A.G."/>
            <person name="Barbian K.D."/>
            <person name="Virtaneva K."/>
            <person name="Ricklefs S.M."/>
            <person name="Sturdevant D.E."/>
            <person name="Graham M.R."/>
            <person name="Vuopio-Varkila J."/>
            <person name="Hoe N.P."/>
            <person name="Musser J.M."/>
        </authorList>
    </citation>
    <scope>NUCLEOTIDE SEQUENCE [LARGE SCALE GENOMIC DNA]</scope>
    <source>
        <strain>ATCC BAA-947 / MGAS5005 / Serotype M1</strain>
    </source>
</reference>
<gene>
    <name evidence="1" type="primary">pepX</name>
    <name type="synonym">pepXP</name>
    <name type="ordered locus">SPy_1858</name>
    <name type="ordered locus">M5005_Spy1577</name>
</gene>
<dbReference type="EC" id="3.4.14.11" evidence="1"/>
<dbReference type="EMBL" id="AE004092">
    <property type="protein sequence ID" value="AAK34574.1"/>
    <property type="molecule type" value="Genomic_DNA"/>
</dbReference>
<dbReference type="EMBL" id="CP000017">
    <property type="protein sequence ID" value="AAZ52195.1"/>
    <property type="molecule type" value="Genomic_DNA"/>
</dbReference>
<dbReference type="RefSeq" id="NP_269853.1">
    <property type="nucleotide sequence ID" value="NC_002737.2"/>
</dbReference>
<dbReference type="SMR" id="Q99Y58"/>
<dbReference type="ESTHER" id="strpy-PEPXP">
    <property type="family name" value="Lactobacillus_peptidase"/>
</dbReference>
<dbReference type="PaxDb" id="1314-HKU360_01698"/>
<dbReference type="KEGG" id="spy:SPy_1858"/>
<dbReference type="KEGG" id="spz:M5005_Spy1577"/>
<dbReference type="PATRIC" id="fig|160490.10.peg.1612"/>
<dbReference type="HOGENOM" id="CLU_011800_0_0_9"/>
<dbReference type="OMA" id="NDWNVKP"/>
<dbReference type="Proteomes" id="UP000000750">
    <property type="component" value="Chromosome"/>
</dbReference>
<dbReference type="GO" id="GO:0005737">
    <property type="term" value="C:cytoplasm"/>
    <property type="evidence" value="ECO:0007669"/>
    <property type="project" value="UniProtKB-SubCell"/>
</dbReference>
<dbReference type="GO" id="GO:0004177">
    <property type="term" value="F:aminopeptidase activity"/>
    <property type="evidence" value="ECO:0007669"/>
    <property type="project" value="UniProtKB-KW"/>
</dbReference>
<dbReference type="GO" id="GO:0008239">
    <property type="term" value="F:dipeptidyl-peptidase activity"/>
    <property type="evidence" value="ECO:0007669"/>
    <property type="project" value="UniProtKB-UniRule"/>
</dbReference>
<dbReference type="GO" id="GO:0008236">
    <property type="term" value="F:serine-type peptidase activity"/>
    <property type="evidence" value="ECO:0007669"/>
    <property type="project" value="UniProtKB-KW"/>
</dbReference>
<dbReference type="GO" id="GO:0006508">
    <property type="term" value="P:proteolysis"/>
    <property type="evidence" value="ECO:0007669"/>
    <property type="project" value="UniProtKB-KW"/>
</dbReference>
<dbReference type="Gene3D" id="1.10.246.70">
    <property type="match status" value="1"/>
</dbReference>
<dbReference type="Gene3D" id="3.40.50.1820">
    <property type="entry name" value="alpha/beta hydrolase"/>
    <property type="match status" value="1"/>
</dbReference>
<dbReference type="Gene3D" id="2.60.120.260">
    <property type="entry name" value="Galactose-binding domain-like"/>
    <property type="match status" value="1"/>
</dbReference>
<dbReference type="HAMAP" id="MF_00698">
    <property type="entry name" value="Aminopeptidase_S15"/>
    <property type="match status" value="1"/>
</dbReference>
<dbReference type="InterPro" id="IPR029058">
    <property type="entry name" value="AB_hydrolase_fold"/>
</dbReference>
<dbReference type="InterPro" id="IPR008979">
    <property type="entry name" value="Galactose-bd-like_sf"/>
</dbReference>
<dbReference type="InterPro" id="IPR008252">
    <property type="entry name" value="Pept_S15_Xpro"/>
</dbReference>
<dbReference type="InterPro" id="IPR015251">
    <property type="entry name" value="PepX_N_dom"/>
</dbReference>
<dbReference type="InterPro" id="IPR036313">
    <property type="entry name" value="PepX_N_dom_sf"/>
</dbReference>
<dbReference type="InterPro" id="IPR000383">
    <property type="entry name" value="Xaa-Pro-like_dom"/>
</dbReference>
<dbReference type="InterPro" id="IPR013736">
    <property type="entry name" value="Xaa-Pro_dipept_C"/>
</dbReference>
<dbReference type="InterPro" id="IPR050585">
    <property type="entry name" value="Xaa-Pro_dipeptidyl-ppase/CocE"/>
</dbReference>
<dbReference type="NCBIfam" id="NF003783">
    <property type="entry name" value="PRK05371.1-4"/>
    <property type="match status" value="1"/>
</dbReference>
<dbReference type="PANTHER" id="PTHR43056:SF10">
    <property type="entry name" value="COCE_NOND FAMILY, PUTATIVE (AFU_ORTHOLOGUE AFUA_7G00600)-RELATED"/>
    <property type="match status" value="1"/>
</dbReference>
<dbReference type="PANTHER" id="PTHR43056">
    <property type="entry name" value="PEPTIDASE S9 PROLYL OLIGOPEPTIDASE"/>
    <property type="match status" value="1"/>
</dbReference>
<dbReference type="Pfam" id="PF02129">
    <property type="entry name" value="Peptidase_S15"/>
    <property type="match status" value="1"/>
</dbReference>
<dbReference type="Pfam" id="PF08530">
    <property type="entry name" value="PepX_C"/>
    <property type="match status" value="1"/>
</dbReference>
<dbReference type="Pfam" id="PF09168">
    <property type="entry name" value="PepX_N"/>
    <property type="match status" value="1"/>
</dbReference>
<dbReference type="PRINTS" id="PR00923">
    <property type="entry name" value="LACTOPTASE"/>
</dbReference>
<dbReference type="SMART" id="SM00939">
    <property type="entry name" value="PepX_C"/>
    <property type="match status" value="1"/>
</dbReference>
<dbReference type="SMART" id="SM00940">
    <property type="entry name" value="PepX_N"/>
    <property type="match status" value="1"/>
</dbReference>
<dbReference type="SUPFAM" id="SSF53474">
    <property type="entry name" value="alpha/beta-Hydrolases"/>
    <property type="match status" value="1"/>
</dbReference>
<dbReference type="SUPFAM" id="SSF49785">
    <property type="entry name" value="Galactose-binding domain-like"/>
    <property type="match status" value="1"/>
</dbReference>
<dbReference type="SUPFAM" id="SSF81761">
    <property type="entry name" value="X-Prolyl dipeptidyl aminopeptidase PepX, N-terminal domain"/>
    <property type="match status" value="1"/>
</dbReference>
<name>PEPX_STRP1</name>
<keyword id="KW-0031">Aminopeptidase</keyword>
<keyword id="KW-0963">Cytoplasm</keyword>
<keyword id="KW-0378">Hydrolase</keyword>
<keyword id="KW-0645">Protease</keyword>
<keyword id="KW-1185">Reference proteome</keyword>
<keyword id="KW-0720">Serine protease</keyword>
<comment type="function">
    <text evidence="1">Removes N-terminal dipeptides sequentially from polypeptides having unsubstituted N-termini provided that the penultimate residue is proline.</text>
</comment>
<comment type="catalytic activity">
    <reaction evidence="1">
        <text>Hydrolyzes Xaa-Pro-|- bonds to release unblocked, N-terminal dipeptides from substrates including Ala-Pro-|-p-nitroanilide and (sequentially) Tyr-Pro-|-Phe-Pro-|-Gly-Pro-|-Ile.</text>
        <dbReference type="EC" id="3.4.14.11"/>
    </reaction>
</comment>
<comment type="subunit">
    <text evidence="1">Homodimer.</text>
</comment>
<comment type="subcellular location">
    <subcellularLocation>
        <location evidence="1">Cytoplasm</location>
    </subcellularLocation>
</comment>
<comment type="similarity">
    <text evidence="1">Belongs to the peptidase S15 family.</text>
</comment>
<feature type="chain" id="PRO_0000220231" description="Xaa-Pro dipeptidyl-peptidase">
    <location>
        <begin position="1"/>
        <end position="760"/>
    </location>
</feature>
<feature type="active site" description="Charge relay system" evidence="1">
    <location>
        <position position="349"/>
    </location>
</feature>
<feature type="active site" description="Charge relay system" evidence="1">
    <location>
        <position position="469"/>
    </location>
</feature>
<feature type="active site" description="Charge relay system" evidence="1">
    <location>
        <position position="499"/>
    </location>
</feature>
<feature type="sequence conflict" description="In Ref. 2; AAZ52195." evidence="2" ref="2">
    <original>Q</original>
    <variation>P</variation>
    <location>
        <position position="198"/>
    </location>
</feature>
<proteinExistence type="inferred from homology"/>
<evidence type="ECO:0000255" key="1">
    <source>
        <dbReference type="HAMAP-Rule" id="MF_00698"/>
    </source>
</evidence>
<evidence type="ECO:0000305" key="2"/>
<protein>
    <recommendedName>
        <fullName evidence="1">Xaa-Pro dipeptidyl-peptidase</fullName>
        <ecNumber evidence="1">3.4.14.11</ecNumber>
    </recommendedName>
    <alternativeName>
        <fullName evidence="1">X-Pro dipeptidyl-peptidase</fullName>
    </alternativeName>
    <alternativeName>
        <fullName evidence="1">X-prolyl-dipeptidyl aminopeptidase</fullName>
        <shortName evidence="1">X-PDAP</shortName>
    </alternativeName>
</protein>